<gene>
    <name type="primary">cidA2</name>
    <name type="ordered locus">BC_3755</name>
</gene>
<organism>
    <name type="scientific">Bacillus cereus (strain ATCC 14579 / DSM 31 / CCUG 7414 / JCM 2152 / NBRC 15305 / NCIMB 9373 / NCTC 2599 / NRRL B-3711)</name>
    <dbReference type="NCBI Taxonomy" id="226900"/>
    <lineage>
        <taxon>Bacteria</taxon>
        <taxon>Bacillati</taxon>
        <taxon>Bacillota</taxon>
        <taxon>Bacilli</taxon>
        <taxon>Bacillales</taxon>
        <taxon>Bacillaceae</taxon>
        <taxon>Bacillus</taxon>
        <taxon>Bacillus cereus group</taxon>
    </lineage>
</organism>
<evidence type="ECO:0000250" key="1"/>
<evidence type="ECO:0000255" key="2"/>
<evidence type="ECO:0000305" key="3"/>
<protein>
    <recommendedName>
        <fullName>Holin-like protein CidA 2</fullName>
    </recommendedName>
</protein>
<feature type="chain" id="PRO_0000213176" description="Holin-like protein CidA 2">
    <location>
        <begin position="1"/>
        <end position="118"/>
    </location>
</feature>
<feature type="transmembrane region" description="Helical" evidence="2">
    <location>
        <begin position="4"/>
        <end position="26"/>
    </location>
</feature>
<feature type="transmembrane region" description="Helical" evidence="2">
    <location>
        <begin position="33"/>
        <end position="52"/>
    </location>
</feature>
<feature type="transmembrane region" description="Helical" evidence="2">
    <location>
        <begin position="62"/>
        <end position="84"/>
    </location>
</feature>
<feature type="transmembrane region" description="Helical" evidence="2">
    <location>
        <begin position="91"/>
        <end position="113"/>
    </location>
</feature>
<dbReference type="EMBL" id="AE016877">
    <property type="protein sequence ID" value="AAP10680.1"/>
    <property type="molecule type" value="Genomic_DNA"/>
</dbReference>
<dbReference type="RefSeq" id="NP_833479.1">
    <property type="nucleotide sequence ID" value="NC_004722.1"/>
</dbReference>
<dbReference type="RefSeq" id="WP_000878488.1">
    <property type="nucleotide sequence ID" value="NZ_CP138336.1"/>
</dbReference>
<dbReference type="SMR" id="Q81A38"/>
<dbReference type="STRING" id="226900.BC_3755"/>
<dbReference type="KEGG" id="bce:BC3755"/>
<dbReference type="PATRIC" id="fig|226900.8.peg.3870"/>
<dbReference type="HOGENOM" id="CLU_113736_3_2_9"/>
<dbReference type="OrthoDB" id="3176438at2"/>
<dbReference type="Proteomes" id="UP000001417">
    <property type="component" value="Chromosome"/>
</dbReference>
<dbReference type="GO" id="GO:0005886">
    <property type="term" value="C:plasma membrane"/>
    <property type="evidence" value="ECO:0007669"/>
    <property type="project" value="UniProtKB-SubCell"/>
</dbReference>
<dbReference type="GO" id="GO:0019835">
    <property type="term" value="P:cytolysis"/>
    <property type="evidence" value="ECO:0007669"/>
    <property type="project" value="UniProtKB-UniRule"/>
</dbReference>
<dbReference type="GO" id="GO:0031640">
    <property type="term" value="P:killing of cells of another organism"/>
    <property type="evidence" value="ECO:0007669"/>
    <property type="project" value="UniProtKB-KW"/>
</dbReference>
<dbReference type="GO" id="GO:0012501">
    <property type="term" value="P:programmed cell death"/>
    <property type="evidence" value="ECO:0007669"/>
    <property type="project" value="UniProtKB-UniRule"/>
</dbReference>
<dbReference type="HAMAP" id="MF_01143">
    <property type="entry name" value="CidA"/>
    <property type="match status" value="1"/>
</dbReference>
<dbReference type="InterPro" id="IPR023760">
    <property type="entry name" value="Holin-like_CidA"/>
</dbReference>
<dbReference type="InterPro" id="IPR005538">
    <property type="entry name" value="LrgA/CidA"/>
</dbReference>
<dbReference type="NCBIfam" id="NF002460">
    <property type="entry name" value="PRK01658.1"/>
    <property type="match status" value="1"/>
</dbReference>
<dbReference type="PANTHER" id="PTHR33931">
    <property type="entry name" value="HOLIN-LIKE PROTEIN CIDA-RELATED"/>
    <property type="match status" value="1"/>
</dbReference>
<dbReference type="PANTHER" id="PTHR33931:SF6">
    <property type="entry name" value="INTEGRAL MEMBRANE PROTEIN YXZK-RELATED"/>
    <property type="match status" value="1"/>
</dbReference>
<dbReference type="Pfam" id="PF03788">
    <property type="entry name" value="LrgA"/>
    <property type="match status" value="1"/>
</dbReference>
<comment type="function">
    <text evidence="1">Increases the activity of extracellular murein hydrolases possibly by mediating their export via hole formation. Inhibited by the antiholin-like proteins LrgAB. In an unstressed cell, the LrgAB products probably inhibit the function of the CidA protein. When a cell is stressed by the addition of antibiotics or by other factors in the environment, CidA possibly oligomerizes within the bacterial cell membrane, creating lesions that disrupt the proton motive force, which in turn results in loss of cell viability. These lesions are also hypothesized to regulate the subsequent cell lysis by either allowing the murein hydrolases access to the cell wall substrate and/or regulating their activity by a possible change in the cell wall pH that results from loss of membrane potential (By similarity).</text>
</comment>
<comment type="subcellular location">
    <subcellularLocation>
        <location evidence="3">Cell membrane</location>
        <topology evidence="3">Multi-pass membrane protein</topology>
    </subcellularLocation>
</comment>
<comment type="similarity">
    <text evidence="3">Belongs to the CidA/LrgA family. CidA subfamily.</text>
</comment>
<accession>Q81A38</accession>
<sequence>MKYVTLLLQVGVLYVFSLVGTWIQGVFHLSMPGSLIGMLILFLLLSTRVLPLKWFELGAEKLIVFLPLFLIPSTTGLMEYGSFLFSKESIIFLLVVASTVVTLIVSGYISQLLITTKK</sequence>
<proteinExistence type="inferred from homology"/>
<reference key="1">
    <citation type="journal article" date="2003" name="Nature">
        <title>Genome sequence of Bacillus cereus and comparative analysis with Bacillus anthracis.</title>
        <authorList>
            <person name="Ivanova N."/>
            <person name="Sorokin A."/>
            <person name="Anderson I."/>
            <person name="Galleron N."/>
            <person name="Candelon B."/>
            <person name="Kapatral V."/>
            <person name="Bhattacharyya A."/>
            <person name="Reznik G."/>
            <person name="Mikhailova N."/>
            <person name="Lapidus A."/>
            <person name="Chu L."/>
            <person name="Mazur M."/>
            <person name="Goltsman E."/>
            <person name="Larsen N."/>
            <person name="D'Souza M."/>
            <person name="Walunas T."/>
            <person name="Grechkin Y."/>
            <person name="Pusch G."/>
            <person name="Haselkorn R."/>
            <person name="Fonstein M."/>
            <person name="Ehrlich S.D."/>
            <person name="Overbeek R."/>
            <person name="Kyrpides N.C."/>
        </authorList>
    </citation>
    <scope>NUCLEOTIDE SEQUENCE [LARGE SCALE GENOMIC DNA]</scope>
    <source>
        <strain>ATCC 14579 / DSM 31 / CCUG 7414 / JCM 2152 / NBRC 15305 / NCIMB 9373 / NCTC 2599 / NRRL B-3711</strain>
    </source>
</reference>
<name>CIDA2_BACCR</name>
<keyword id="KW-1003">Cell membrane</keyword>
<keyword id="KW-0204">Cytolysis</keyword>
<keyword id="KW-0472">Membrane</keyword>
<keyword id="KW-1185">Reference proteome</keyword>
<keyword id="KW-0812">Transmembrane</keyword>
<keyword id="KW-1133">Transmembrane helix</keyword>